<protein>
    <recommendedName>
        <fullName evidence="1">Protein-arginine kinase</fullName>
        <ecNumber evidence="2 3">2.7.14.1</ecNumber>
    </recommendedName>
</protein>
<keyword id="KW-0002">3D-structure</keyword>
<keyword id="KW-0021">Allosteric enzyme</keyword>
<keyword id="KW-0067">ATP-binding</keyword>
<keyword id="KW-0418">Kinase</keyword>
<keyword id="KW-0547">Nucleotide-binding</keyword>
<keyword id="KW-0808">Transferase</keyword>
<feature type="chain" id="PRO_0000430097" description="Protein-arginine kinase">
    <location>
        <begin position="1"/>
        <end position="363"/>
    </location>
</feature>
<feature type="domain" description="Phosphagen kinase C-terminal">
    <location>
        <begin position="24"/>
        <end position="255"/>
    </location>
</feature>
<feature type="short sequence motif" description="RDXXRA motif of the pArg binding pocket involved in allosteric regulation" evidence="3">
    <location>
        <begin position="338"/>
        <end position="343"/>
    </location>
</feature>
<feature type="binding site" evidence="6">
    <location>
        <begin position="27"/>
        <end position="31"/>
    </location>
    <ligand>
        <name>ATP</name>
        <dbReference type="ChEBI" id="CHEBI:30616"/>
    </ligand>
</feature>
<feature type="binding site" evidence="1">
    <location>
        <position position="92"/>
    </location>
    <ligand>
        <name>ATP</name>
        <dbReference type="ChEBI" id="CHEBI:30616"/>
    </ligand>
</feature>
<feature type="binding site" evidence="6">
    <location>
        <position position="126"/>
    </location>
    <ligand>
        <name>ATP</name>
        <dbReference type="ChEBI" id="CHEBI:30616"/>
    </ligand>
</feature>
<feature type="binding site" evidence="1 6">
    <location>
        <begin position="177"/>
        <end position="181"/>
    </location>
    <ligand>
        <name>ATP</name>
        <dbReference type="ChEBI" id="CHEBI:30616"/>
    </ligand>
</feature>
<feature type="binding site" evidence="1">
    <location>
        <begin position="208"/>
        <end position="213"/>
    </location>
    <ligand>
        <name>ATP</name>
        <dbReference type="ChEBI" id="CHEBI:30616"/>
    </ligand>
</feature>
<feature type="mutagenesis site" description="Loss of protein kinase activity." evidence="3">
    <original>H</original>
    <variation>A</variation>
    <location>
        <position position="92"/>
    </location>
</feature>
<feature type="mutagenesis site" description="Loss of protein kinase activity." evidence="2 3">
    <original>E</original>
    <variation>A</variation>
    <location>
        <position position="122"/>
    </location>
</feature>
<feature type="mutagenesis site" description="Loss of protein kinase activity." evidence="3">
    <original>C</original>
    <variation>A</variation>
    <location>
        <position position="168"/>
    </location>
</feature>
<feature type="mutagenesis site" description="Loss of protein kinase activity." evidence="3">
    <original>R</original>
    <variation>A</variation>
    <location>
        <position position="208"/>
    </location>
</feature>
<feature type="mutagenesis site" description="Loss of protein kinase activity." evidence="3">
    <original>Y</original>
    <variation>A</variation>
    <location>
        <position position="211"/>
    </location>
</feature>
<feature type="mutagenesis site" description="Loss of protein kinase activity." evidence="2 3">
    <original>E</original>
    <variation>A</variation>
    <variation>D</variation>
    <location>
        <position position="213"/>
    </location>
</feature>
<feature type="mutagenesis site" description="Abolishes dimerization. Large decrease in protein kinase activity." evidence="3">
    <original>R</original>
    <variation>E</variation>
    <location>
        <position position="273"/>
    </location>
</feature>
<feature type="mutagenesis site" description="Abolishes dimerization. Large decrease in protein kinase activity." evidence="3">
    <original>R</original>
    <variation>E</variation>
    <location>
        <position position="282"/>
    </location>
</feature>
<feature type="helix" evidence="10">
    <location>
        <begin position="5"/>
        <end position="8"/>
    </location>
</feature>
<feature type="helix" evidence="10">
    <location>
        <begin position="13"/>
        <end position="16"/>
    </location>
</feature>
<feature type="turn" evidence="10">
    <location>
        <begin position="20"/>
        <end position="24"/>
    </location>
</feature>
<feature type="strand" evidence="10">
    <location>
        <begin position="25"/>
        <end position="34"/>
    </location>
</feature>
<feature type="turn" evidence="10">
    <location>
        <begin position="42"/>
        <end position="44"/>
    </location>
</feature>
<feature type="helix" evidence="10">
    <location>
        <begin position="47"/>
        <end position="61"/>
    </location>
</feature>
<feature type="helix" evidence="10">
    <location>
        <begin position="67"/>
        <end position="69"/>
    </location>
</feature>
<feature type="strand" evidence="10">
    <location>
        <begin position="71"/>
        <end position="76"/>
    </location>
</feature>
<feature type="helix" evidence="10">
    <location>
        <begin position="77"/>
        <end position="79"/>
    </location>
</feature>
<feature type="helix" evidence="10">
    <location>
        <begin position="82"/>
        <end position="90"/>
    </location>
</feature>
<feature type="helix" evidence="10">
    <location>
        <begin position="96"/>
        <end position="101"/>
    </location>
</feature>
<feature type="strand" evidence="10">
    <location>
        <begin position="106"/>
        <end position="110"/>
    </location>
</feature>
<feature type="strand" evidence="10">
    <location>
        <begin position="113"/>
        <end position="134"/>
    </location>
</feature>
<feature type="helix" evidence="10">
    <location>
        <begin position="136"/>
        <end position="151"/>
    </location>
</feature>
<feature type="turn" evidence="10">
    <location>
        <begin position="160"/>
        <end position="162"/>
    </location>
</feature>
<feature type="helix" evidence="10">
    <location>
        <begin position="169"/>
        <end position="171"/>
    </location>
</feature>
<feature type="strand" evidence="10">
    <location>
        <begin position="176"/>
        <end position="183"/>
    </location>
</feature>
<feature type="helix" evidence="10">
    <location>
        <begin position="185"/>
        <end position="189"/>
    </location>
</feature>
<feature type="turn" evidence="11">
    <location>
        <begin position="190"/>
        <end position="192"/>
    </location>
</feature>
<feature type="helix" evidence="10">
    <location>
        <begin position="193"/>
        <end position="202"/>
    </location>
</feature>
<feature type="strand" evidence="10">
    <location>
        <begin position="205"/>
        <end position="213"/>
    </location>
</feature>
<feature type="helix" evidence="10">
    <location>
        <begin position="218"/>
        <end position="220"/>
    </location>
</feature>
<feature type="strand" evidence="10">
    <location>
        <begin position="221"/>
        <end position="226"/>
    </location>
</feature>
<feature type="strand" evidence="10">
    <location>
        <begin position="230"/>
        <end position="232"/>
    </location>
</feature>
<feature type="helix" evidence="10">
    <location>
        <begin position="234"/>
        <end position="263"/>
    </location>
</feature>
<feature type="helix" evidence="10">
    <location>
        <begin position="265"/>
        <end position="280"/>
    </location>
</feature>
<feature type="helix" evidence="10">
    <location>
        <begin position="286"/>
        <end position="301"/>
    </location>
</feature>
<feature type="helix" evidence="10">
    <location>
        <begin position="311"/>
        <end position="319"/>
    </location>
</feature>
<feature type="helix" evidence="10">
    <location>
        <begin position="322"/>
        <end position="329"/>
    </location>
</feature>
<feature type="helix" evidence="10">
    <location>
        <begin position="335"/>
        <end position="355"/>
    </location>
</feature>
<organism>
    <name type="scientific">Geobacillus stearothermophilus</name>
    <name type="common">Bacillus stearothermophilus</name>
    <dbReference type="NCBI Taxonomy" id="1422"/>
    <lineage>
        <taxon>Bacteria</taxon>
        <taxon>Bacillati</taxon>
        <taxon>Bacillota</taxon>
        <taxon>Bacilli</taxon>
        <taxon>Bacillales</taxon>
        <taxon>Anoxybacillaceae</taxon>
        <taxon>Geobacillus</taxon>
    </lineage>
</organism>
<dbReference type="EC" id="2.7.14.1" evidence="2 3"/>
<dbReference type="RefSeq" id="WP_033017267.1">
    <property type="nucleotide sequence ID" value="NZ_RCTK01000011.1"/>
</dbReference>
<dbReference type="PDB" id="6FH1">
    <property type="method" value="X-ray"/>
    <property type="resolution" value="1.70 A"/>
    <property type="chains" value="A/B=1-355"/>
</dbReference>
<dbReference type="PDB" id="6FH2">
    <property type="method" value="X-ray"/>
    <property type="resolution" value="2.70 A"/>
    <property type="chains" value="A/B=1-355"/>
</dbReference>
<dbReference type="PDB" id="6FH3">
    <property type="method" value="X-ray"/>
    <property type="resolution" value="1.85 A"/>
    <property type="chains" value="A/B=1-355"/>
</dbReference>
<dbReference type="PDBsum" id="6FH1"/>
<dbReference type="PDBsum" id="6FH2"/>
<dbReference type="PDBsum" id="6FH3"/>
<dbReference type="SMR" id="P0DMM5"/>
<dbReference type="OrthoDB" id="9791353at2"/>
<dbReference type="BRENDA" id="2.7.14.1">
    <property type="organism ID" value="623"/>
</dbReference>
<dbReference type="GO" id="GO:0005615">
    <property type="term" value="C:extracellular space"/>
    <property type="evidence" value="ECO:0007669"/>
    <property type="project" value="TreeGrafter"/>
</dbReference>
<dbReference type="GO" id="GO:0005524">
    <property type="term" value="F:ATP binding"/>
    <property type="evidence" value="ECO:0007669"/>
    <property type="project" value="UniProtKB-KW"/>
</dbReference>
<dbReference type="GO" id="GO:0004111">
    <property type="term" value="F:creatine kinase activity"/>
    <property type="evidence" value="ECO:0007669"/>
    <property type="project" value="InterPro"/>
</dbReference>
<dbReference type="GO" id="GO:0004672">
    <property type="term" value="F:protein kinase activity"/>
    <property type="evidence" value="ECO:0007669"/>
    <property type="project" value="UniProtKB-UniRule"/>
</dbReference>
<dbReference type="GO" id="GO:0046314">
    <property type="term" value="P:phosphocreatine biosynthetic process"/>
    <property type="evidence" value="ECO:0007669"/>
    <property type="project" value="InterPro"/>
</dbReference>
<dbReference type="CDD" id="cd07930">
    <property type="entry name" value="bacterial_phosphagen_kinase"/>
    <property type="match status" value="1"/>
</dbReference>
<dbReference type="FunFam" id="3.30.590.10:FF:000007">
    <property type="entry name" value="Protein-arginine kinase"/>
    <property type="match status" value="1"/>
</dbReference>
<dbReference type="Gene3D" id="3.30.590.10">
    <property type="entry name" value="Glutamine synthetase/guanido kinase, catalytic domain"/>
    <property type="match status" value="1"/>
</dbReference>
<dbReference type="HAMAP" id="MF_00602">
    <property type="entry name" value="Prot_Arg_kinase"/>
    <property type="match status" value="1"/>
</dbReference>
<dbReference type="InterPro" id="IPR023660">
    <property type="entry name" value="Arg_Kinase"/>
</dbReference>
<dbReference type="InterPro" id="IPR000749">
    <property type="entry name" value="ATP-guanido_PTrfase"/>
</dbReference>
<dbReference type="InterPro" id="IPR022415">
    <property type="entry name" value="ATP-guanido_PTrfase_AS"/>
</dbReference>
<dbReference type="InterPro" id="IPR022414">
    <property type="entry name" value="ATP-guanido_PTrfase_cat"/>
</dbReference>
<dbReference type="InterPro" id="IPR014746">
    <property type="entry name" value="Gln_synth/guanido_kin_cat_dom"/>
</dbReference>
<dbReference type="NCBIfam" id="NF002194">
    <property type="entry name" value="PRK01059.1-4"/>
    <property type="match status" value="1"/>
</dbReference>
<dbReference type="NCBIfam" id="NF002195">
    <property type="entry name" value="PRK01059.1-5"/>
    <property type="match status" value="1"/>
</dbReference>
<dbReference type="PANTHER" id="PTHR11547:SF38">
    <property type="entry name" value="ARGININE KINASE 1-RELATED"/>
    <property type="match status" value="1"/>
</dbReference>
<dbReference type="PANTHER" id="PTHR11547">
    <property type="entry name" value="ARGININE OR CREATINE KINASE"/>
    <property type="match status" value="1"/>
</dbReference>
<dbReference type="Pfam" id="PF00217">
    <property type="entry name" value="ATP-gua_Ptrans"/>
    <property type="match status" value="1"/>
</dbReference>
<dbReference type="SUPFAM" id="SSF55931">
    <property type="entry name" value="Glutamine synthetase/guanido kinase"/>
    <property type="match status" value="1"/>
</dbReference>
<dbReference type="PROSITE" id="PS00112">
    <property type="entry name" value="PHOSPHAGEN_KINASE"/>
    <property type="match status" value="1"/>
</dbReference>
<dbReference type="PROSITE" id="PS51510">
    <property type="entry name" value="PHOSPHAGEN_KINASE_C"/>
    <property type="match status" value="1"/>
</dbReference>
<accession>P0DMM5</accession>
<sequence>MSFGKFFNTAVSAWMSQEGPNSDIVLSSRIRLARNIVDFRFPTLFSSEEAKQIVALFERAFVHRPYGEAGRFELLKMSELQPIEKRVLVEKHLISPHLAEDSPFGACLLSENEEISIMINEEDHIRIQCLFPGLQLAEALEAASELDDWIEGHVNYAFDERLGYLTSCPTNVGTGLRASVMMHLPALVLTQQINRIIPAINQLGLVVRGTYGEGSEALGNIFQISNQITLGKSEEDIVADLHTIVEQLIAQERAARQALVKTLGIQLEDKVFRSYGILANCRVIDSKEAAQCLSDVRLGIDLGYIKNVSRNILNELMILTQPGFLQQYAGGVLRPEERDVRRAALIRERLRMETRRKMEGDER</sequence>
<proteinExistence type="evidence at protein level"/>
<reference key="1">
    <citation type="submission" date="2014-05" db="UniProtKB">
        <authorList>
            <person name="Fuhrmann J."/>
        </authorList>
    </citation>
    <scope>NUCLEOTIDE SEQUENCE [GENOMIC DNA]</scope>
    <source>
        <strain>ATCC 12980 / DSM 22 / CCM 2062 / JCM 2501 / NBRC 12550 / NCIMB 8923 / NCTC 10339 / R-35646 / VKM B-510</strain>
    </source>
</reference>
<reference key="2">
    <citation type="journal article" date="2009" name="Science">
        <title>McsB is a protein arginine kinase that phosphorylates and inhibits the heat-shock regulator CtsR.</title>
        <authorList>
            <person name="Fuhrmann J."/>
            <person name="Schmidt A."/>
            <person name="Spiess S."/>
            <person name="Lehner A."/>
            <person name="Turgay K."/>
            <person name="Mechtler K."/>
            <person name="Charpentier E."/>
            <person name="Clausen T."/>
        </authorList>
    </citation>
    <scope>FUNCTION AS AN ARGININE KINASE</scope>
    <scope>CATALYTIC ACTIVITY</scope>
    <scope>SUBSTRATE SPECIFICITY</scope>
    <scope>MUTAGENESIS OF GLU-122 AND GLU-213</scope>
    <source>
        <strain>ATCC 12980 / DSM 22 / CCM 2062 / JCM 2501 / NBRC 12550 / NCIMB 8923 / NCTC 10339 / R-35646 / VKM B-510</strain>
    </source>
</reference>
<reference evidence="7 8 9" key="3">
    <citation type="journal article" date="2019" name="Nat. Chem. Biol.">
        <title>Structure of McsB, a protein kinase for regulated arginine phosphorylation.</title>
        <authorList>
            <person name="Suskiewicz M.J."/>
            <person name="Hajdusits B."/>
            <person name="Beveridge R."/>
            <person name="Heuck A."/>
            <person name="Vu L.D."/>
            <person name="Kurzbauer R."/>
            <person name="Hauer K."/>
            <person name="Thoeny V."/>
            <person name="Rumpel K."/>
            <person name="Mechtler K."/>
            <person name="Meinhart A."/>
            <person name="Clausen T."/>
        </authorList>
    </citation>
    <scope>X-RAY CRYSTALLOGRAPHY (1.70 ANGSTROMS) OF 1-355 OF APOENZYME AND IN COMPLEXES WITH ATP ANALOG AND PHOSPHOARGININE</scope>
    <scope>FUNCTION</scope>
    <scope>CATALYTIC ACTIVITY</scope>
    <scope>ACTIVITY REGULATION</scope>
    <scope>DOMAIN</scope>
    <scope>SUBUNIT</scope>
    <scope>MUTAGENESIS OF HIS-92; GLU-122; CYS-168; ARG-208; TYR-211; GLU-213; ARG-273 AND ARG-282</scope>
</reference>
<gene>
    <name evidence="4 5" type="primary">mcsB</name>
</gene>
<evidence type="ECO:0000255" key="1">
    <source>
        <dbReference type="HAMAP-Rule" id="MF_00602"/>
    </source>
</evidence>
<evidence type="ECO:0000269" key="2">
    <source>
    </source>
</evidence>
<evidence type="ECO:0000269" key="3">
    <source>
    </source>
</evidence>
<evidence type="ECO:0000303" key="4">
    <source>
    </source>
</evidence>
<evidence type="ECO:0000303" key="5">
    <source>
    </source>
</evidence>
<evidence type="ECO:0000305" key="6">
    <source>
    </source>
</evidence>
<evidence type="ECO:0007744" key="7">
    <source>
        <dbReference type="PDB" id="6FH1"/>
    </source>
</evidence>
<evidence type="ECO:0007744" key="8">
    <source>
        <dbReference type="PDB" id="6FH2"/>
    </source>
</evidence>
<evidence type="ECO:0007744" key="9">
    <source>
        <dbReference type="PDB" id="6FH3"/>
    </source>
</evidence>
<evidence type="ECO:0007829" key="10">
    <source>
        <dbReference type="PDB" id="6FH1"/>
    </source>
</evidence>
<evidence type="ECO:0007829" key="11">
    <source>
        <dbReference type="PDB" id="6FH2"/>
    </source>
</evidence>
<comment type="function">
    <text evidence="2 3">Catalyzes the specific phosphorylation of arginine residues in a large number of proteins. Is part of the bacterial stress response system, where it is involved in regulating the global heat shock repressor CtsR; phosphorylates arginine residues in the winged helix-turn-helix domain of CtsR, thereby preventing its binding to DNA and consequently inducing the expression of repressed genes. Protein arginine phosphorylation has a physiologically important role and is involved in the regulation of many critical cellular processes, such as protein homeostasis, motility, competence, and stringent and stress responses, by regulating gene expression and protein activity. Acts exclusively on Arg residues, since it cannot phosphorylate Tyr, Ser, Thr, His, Asp and Lys. Has no free arginine kinase activity.</text>
</comment>
<comment type="catalytic activity">
    <reaction evidence="2 3">
        <text>L-arginyl-[protein] + ATP = N(omega)-phospho-L-arginyl-[protein] + ADP + H(+)</text>
        <dbReference type="Rhea" id="RHEA:43384"/>
        <dbReference type="Rhea" id="RHEA-COMP:10532"/>
        <dbReference type="Rhea" id="RHEA-COMP:10533"/>
        <dbReference type="ChEBI" id="CHEBI:15378"/>
        <dbReference type="ChEBI" id="CHEBI:29965"/>
        <dbReference type="ChEBI" id="CHEBI:30616"/>
        <dbReference type="ChEBI" id="CHEBI:83226"/>
        <dbReference type="ChEBI" id="CHEBI:456216"/>
        <dbReference type="EC" id="2.7.14.1"/>
    </reaction>
</comment>
<comment type="activity regulation">
    <text evidence="3">Appears to be allosterically activated by the binding of pArg-containing polypeptides to the pArg-binding pocket localized in the C-terminal domain of McsB.</text>
</comment>
<comment type="subunit">
    <text evidence="3">Homodimer. Dimerization is important for full catalytic activity.</text>
</comment>
<comment type="domain">
    <text evidence="3">In the 3D-structure the McsB dimer adopts a flat 'domino tile' shape, with the two active sites opening on the same side. Individual subunits are composed of the N-terminal catalytic, ATP:guanido phosphotransferase domain (PD, residues 1-263) and the C-terminal dimerization domain (DD, residues 264-355), which are linearly organized in a PD-DD-DD*-PD* manner (asterisk denotes the partner protomer). The PhK-like catalytic phosphotransferase domain is structurally adapted to target protein substrates. The C-terminal DD of McsB contains a pArg-binding pocket that allows pArg-carrying proteins to allosterically enhance McsB kinase activity.</text>
</comment>
<comment type="similarity">
    <text evidence="1">Belongs to the ATP:guanido phosphotransferase family.</text>
</comment>
<name>MCSB_GEOSE</name>